<feature type="chain" id="PRO_0000266698" description="Small ribosomal subunit protein bS21">
    <location>
        <begin position="1"/>
        <end position="79"/>
    </location>
</feature>
<feature type="region of interest" description="Disordered" evidence="2">
    <location>
        <begin position="47"/>
        <end position="79"/>
    </location>
</feature>
<feature type="compositionally biased region" description="Basic residues" evidence="2">
    <location>
        <begin position="47"/>
        <end position="59"/>
    </location>
</feature>
<feature type="compositionally biased region" description="Basic residues" evidence="2">
    <location>
        <begin position="69"/>
        <end position="79"/>
    </location>
</feature>
<name>RS21_LEGPA</name>
<reference key="1">
    <citation type="journal article" date="2004" name="Nat. Genet.">
        <title>Evidence in the Legionella pneumophila genome for exploitation of host cell functions and high genome plasticity.</title>
        <authorList>
            <person name="Cazalet C."/>
            <person name="Rusniok C."/>
            <person name="Brueggemann H."/>
            <person name="Zidane N."/>
            <person name="Magnier A."/>
            <person name="Ma L."/>
            <person name="Tichit M."/>
            <person name="Jarraud S."/>
            <person name="Bouchier C."/>
            <person name="Vandenesch F."/>
            <person name="Kunst F."/>
            <person name="Etienne J."/>
            <person name="Glaser P."/>
            <person name="Buchrieser C."/>
        </authorList>
    </citation>
    <scope>NUCLEOTIDE SEQUENCE [LARGE SCALE GENOMIC DNA]</scope>
    <source>
        <strain>Paris</strain>
    </source>
</reference>
<accession>Q5X2T0</accession>
<sequence>MPTVRVKEGENPEYALRRFKRSCEKAGILTELRRREFYEKPTAERKRKQAAAVKRHLKKISRDVSSRRGVGHRRKKSTT</sequence>
<gene>
    <name evidence="1" type="primary">rpsU</name>
    <name type="ordered locus">lpp2307</name>
</gene>
<dbReference type="EMBL" id="CR628336">
    <property type="protein sequence ID" value="CAH13460.1"/>
    <property type="molecule type" value="Genomic_DNA"/>
</dbReference>
<dbReference type="RefSeq" id="WP_010948064.1">
    <property type="nucleotide sequence ID" value="NC_006368.1"/>
</dbReference>
<dbReference type="SMR" id="Q5X2T0"/>
<dbReference type="GeneID" id="57036351"/>
<dbReference type="KEGG" id="lpp:lpp2307"/>
<dbReference type="LegioList" id="lpp2307"/>
<dbReference type="HOGENOM" id="CLU_159258_1_0_6"/>
<dbReference type="GO" id="GO:1990904">
    <property type="term" value="C:ribonucleoprotein complex"/>
    <property type="evidence" value="ECO:0007669"/>
    <property type="project" value="UniProtKB-KW"/>
</dbReference>
<dbReference type="GO" id="GO:0005840">
    <property type="term" value="C:ribosome"/>
    <property type="evidence" value="ECO:0007669"/>
    <property type="project" value="UniProtKB-KW"/>
</dbReference>
<dbReference type="GO" id="GO:0003735">
    <property type="term" value="F:structural constituent of ribosome"/>
    <property type="evidence" value="ECO:0007669"/>
    <property type="project" value="InterPro"/>
</dbReference>
<dbReference type="GO" id="GO:0006412">
    <property type="term" value="P:translation"/>
    <property type="evidence" value="ECO:0007669"/>
    <property type="project" value="UniProtKB-UniRule"/>
</dbReference>
<dbReference type="Gene3D" id="1.20.5.1150">
    <property type="entry name" value="Ribosomal protein S8"/>
    <property type="match status" value="1"/>
</dbReference>
<dbReference type="HAMAP" id="MF_00358">
    <property type="entry name" value="Ribosomal_bS21"/>
    <property type="match status" value="1"/>
</dbReference>
<dbReference type="InterPro" id="IPR001911">
    <property type="entry name" value="Ribosomal_bS21"/>
</dbReference>
<dbReference type="InterPro" id="IPR018278">
    <property type="entry name" value="Ribosomal_bS21_CS"/>
</dbReference>
<dbReference type="InterPro" id="IPR038380">
    <property type="entry name" value="Ribosomal_bS21_sf"/>
</dbReference>
<dbReference type="NCBIfam" id="TIGR00030">
    <property type="entry name" value="S21p"/>
    <property type="match status" value="1"/>
</dbReference>
<dbReference type="PANTHER" id="PTHR21109">
    <property type="entry name" value="MITOCHONDRIAL 28S RIBOSOMAL PROTEIN S21"/>
    <property type="match status" value="1"/>
</dbReference>
<dbReference type="PANTHER" id="PTHR21109:SF22">
    <property type="entry name" value="SMALL RIBOSOMAL SUBUNIT PROTEIN BS21"/>
    <property type="match status" value="1"/>
</dbReference>
<dbReference type="Pfam" id="PF01165">
    <property type="entry name" value="Ribosomal_S21"/>
    <property type="match status" value="1"/>
</dbReference>
<dbReference type="PRINTS" id="PR00976">
    <property type="entry name" value="RIBOSOMALS21"/>
</dbReference>
<dbReference type="PROSITE" id="PS01181">
    <property type="entry name" value="RIBOSOMAL_S21"/>
    <property type="match status" value="1"/>
</dbReference>
<organism>
    <name type="scientific">Legionella pneumophila (strain Paris)</name>
    <dbReference type="NCBI Taxonomy" id="297246"/>
    <lineage>
        <taxon>Bacteria</taxon>
        <taxon>Pseudomonadati</taxon>
        <taxon>Pseudomonadota</taxon>
        <taxon>Gammaproteobacteria</taxon>
        <taxon>Legionellales</taxon>
        <taxon>Legionellaceae</taxon>
        <taxon>Legionella</taxon>
    </lineage>
</organism>
<evidence type="ECO:0000255" key="1">
    <source>
        <dbReference type="HAMAP-Rule" id="MF_00358"/>
    </source>
</evidence>
<evidence type="ECO:0000256" key="2">
    <source>
        <dbReference type="SAM" id="MobiDB-lite"/>
    </source>
</evidence>
<evidence type="ECO:0000305" key="3"/>
<comment type="similarity">
    <text evidence="1">Belongs to the bacterial ribosomal protein bS21 family.</text>
</comment>
<protein>
    <recommendedName>
        <fullName evidence="1">Small ribosomal subunit protein bS21</fullName>
    </recommendedName>
    <alternativeName>
        <fullName evidence="3">30S ribosomal protein S21</fullName>
    </alternativeName>
</protein>
<proteinExistence type="inferred from homology"/>
<keyword id="KW-0687">Ribonucleoprotein</keyword>
<keyword id="KW-0689">Ribosomal protein</keyword>